<protein>
    <recommendedName>
        <fullName>Ephrin type-B receptor 6</fullName>
    </recommendedName>
    <alternativeName>
        <fullName>MEP</fullName>
    </alternativeName>
    <alternativeName>
        <fullName>Tyrosine-protein kinase-defective receptor EPH-6</fullName>
    </alternativeName>
</protein>
<evidence type="ECO:0000250" key="1"/>
<evidence type="ECO:0000255" key="2"/>
<evidence type="ECO:0000255" key="3">
    <source>
        <dbReference type="PROSITE-ProRule" id="PRU00159"/>
    </source>
</evidence>
<evidence type="ECO:0000255" key="4">
    <source>
        <dbReference type="PROSITE-ProRule" id="PRU00184"/>
    </source>
</evidence>
<evidence type="ECO:0000255" key="5">
    <source>
        <dbReference type="PROSITE-ProRule" id="PRU00316"/>
    </source>
</evidence>
<evidence type="ECO:0000255" key="6">
    <source>
        <dbReference type="PROSITE-ProRule" id="PRU00883"/>
    </source>
</evidence>
<evidence type="ECO:0000269" key="7">
    <source>
    </source>
</evidence>
<evidence type="ECO:0000303" key="8">
    <source>
    </source>
</evidence>
<evidence type="ECO:0000305" key="9"/>
<accession>O08644</accession>
<accession>Q3TQ77</accession>
<accession>Q8BN76</accession>
<accession>Q8K0A9</accession>
<comment type="function">
    <text evidence="1">Kinase-defective receptor for members of the ephrin-B family. Binds to ephrin-B1 and ephrin-B2. Modulates cell adhesion and migration by exerting both positive and negative effects upon stimulation with ephrin-B2. Inhibits JNK activation, T-cell receptor-induced IL-2 secretion and CD25 expression upon stimulation with ephrin-B2 (By similarity).</text>
</comment>
<comment type="subunit">
    <text evidence="1">Interacts with CBL and EPHB1. Interacts with FYN; this interaction takes place in a ligand-independent manner (By similarity).</text>
</comment>
<comment type="subcellular location">
    <molecule>Isoform 1</molecule>
    <subcellularLocation>
        <location>Cell membrane</location>
        <topology>Single-pass type I membrane protein</topology>
    </subcellularLocation>
</comment>
<comment type="subcellular location">
    <molecule>Isoform 2</molecule>
    <subcellularLocation>
        <location>Secreted</location>
    </subcellularLocation>
</comment>
<comment type="subcellular location">
    <molecule>Isoform 3</molecule>
    <subcellularLocation>
        <location>Secreted</location>
    </subcellularLocation>
</comment>
<comment type="alternative products">
    <event type="alternative splicing"/>
    <isoform>
        <id>O08644-1</id>
        <name>1</name>
        <sequence type="displayed"/>
    </isoform>
    <isoform>
        <id>O08644-2</id>
        <name>2</name>
        <sequence type="described" ref="VSP_003020 VSP_003021"/>
    </isoform>
    <isoform>
        <id>O08644-3</id>
        <name>3</name>
        <sequence type="described" ref="VSP_003022 VSP_003023"/>
    </isoform>
    <text>Additional isoforms seem to exist.</text>
</comment>
<comment type="tissue specificity">
    <text evidence="7">High level in thymus, and brain. Very low levels of expression in kidney, lung, liver, bone marrow, skeletal muscle, spleen from 2 week old and adult mice, heart, testes and embryonic stem cells.</text>
</comment>
<comment type="domain">
    <text evidence="3">The protein kinase domain is predicted to be catalytically inactive. Its extracellular domain is capable of promoting cell adhesion and migration in response to low concentrations of ephrin-B2, but its cytoplasmic domain is essential for cell repulsion and inhibition of migration induced by high concentrations of ephrin-B2 (By similarity).</text>
</comment>
<comment type="PTM">
    <text evidence="1">Ligand-binding increases phosphorylation on tyrosine residues. Phosphorylation on tyrosine residues is mediated by transphosphorylation by the catalytically active EPHB1 in a ligand-independent manner. Tyrosine phosphorylation of the receptor may act as a switch on the functional transition from cell adhesion/attraction to de-adhesion/repulsion (By similarity).</text>
</comment>
<comment type="similarity">
    <text evidence="3">Belongs to the protein kinase superfamily. Tyr protein kinase family. Ephrin receptor subfamily.</text>
</comment>
<name>EPHB6_MOUSE</name>
<proteinExistence type="evidence at transcript level"/>
<organism>
    <name type="scientific">Mus musculus</name>
    <name type="common">Mouse</name>
    <dbReference type="NCBI Taxonomy" id="10090"/>
    <lineage>
        <taxon>Eukaryota</taxon>
        <taxon>Metazoa</taxon>
        <taxon>Chordata</taxon>
        <taxon>Craniata</taxon>
        <taxon>Vertebrata</taxon>
        <taxon>Euteleostomi</taxon>
        <taxon>Mammalia</taxon>
        <taxon>Eutheria</taxon>
        <taxon>Euarchontoglires</taxon>
        <taxon>Glires</taxon>
        <taxon>Rodentia</taxon>
        <taxon>Myomorpha</taxon>
        <taxon>Muroidea</taxon>
        <taxon>Muridae</taxon>
        <taxon>Murinae</taxon>
        <taxon>Mus</taxon>
        <taxon>Mus</taxon>
    </lineage>
</organism>
<sequence>MATEGTTGSGSRVVAGMVCSLWLLVLGSSVLALEEVLLDTTGETSEIGWLTYPPGGWDEVSVLDDQRRLTRTFEACHVAGLPPGSGQDNWLQTHFVERRGAQRAHIRLHFSVRACSSLGVSGGTCRETFTLYYRQADEPDGPDSIAAWHLKRWTKVDTIAADESFPASSSSSSWAVGPHRTGQRVGLQLNVKERSFGPLTQRGFYVAFQDTGACLALVAVKLFSYTCPSVLRAFASFPETQASGAGGASLVAAVGTCVAHAEPEEDGVGGQAGGSPPRLHCNGEGRWMVAVGGCRCQPGHQPARGDKLCQACPEGSYKALAGNVPCSPCPARSHSPDPAAPVCPCLQGFYRASSDPPEAPCTGPPSAPRELWFEVQGSALMLHWRLPQELGGRGDLLFNVVCKECGGHGEPSSGGMCRRCRDEVHFDPRQRGLTESRVLVGGLRAHVPYILEVQAVNGVSELSPDPPQAAAINVSTSHEVPSAVPVMHQVSRAANSITVSWPQPEQTNGNILDYQLRYYDQAEDESHSFTMTSETNTATVTRLSPGHIYGFQVRARTAAGHGPYGGKVYFQTLPQGELSSQLPEKLSLVIGSILGALAFLLLAAITVLAVIFQRKRRGTGYTEQLQQYSSPGLGVKYYIDPSTYDDPCQAIRELAREVDPTYIKIEEVIGAGSFGEVRRGRLQPRGRREQAVAIQALWAGGAESLKMTFLGRAALLGQFQHPNILRLEGVVTKSRPVMVLTELMELGPLDSFLRQREGQFSSLQLVAMQRGVAAAMQYLSSFAFVHRALSARSVLVNSHLVCKVARLGHSPQGSSSLLRWAAPEVITHGKYTTSSDVWSFGILMWEVMSYGERPYWDMNEQEVLNAIEQEFRLPPPPGCPPGLHLLMLDTWQKDRARRPHFDQLVAAFDKMIRKPDTLQAEGGSGDRPSQALLNPVALDFPCLDSPQAWLSAIGLECYQDNFSKFGLSTFSDVAQLSLEDLPGLGITLAGHQKKLLHNIQLLQQHLRQPGSVEV</sequence>
<dbReference type="EMBL" id="L77867">
    <property type="protein sequence ID" value="AAB51430.1"/>
    <property type="molecule type" value="mRNA"/>
</dbReference>
<dbReference type="EMBL" id="AK087423">
    <property type="protein sequence ID" value="BAC39868.1"/>
    <property type="molecule type" value="mRNA"/>
</dbReference>
<dbReference type="EMBL" id="AK163823">
    <property type="protein sequence ID" value="BAE37507.1"/>
    <property type="molecule type" value="mRNA"/>
</dbReference>
<dbReference type="EMBL" id="BC031924">
    <property type="protein sequence ID" value="AAH31924.1"/>
    <property type="molecule type" value="mRNA"/>
</dbReference>
<dbReference type="CCDS" id="CCDS20051.1">
    <molecule id="O08644-1"/>
</dbReference>
<dbReference type="RefSeq" id="NP_001139823.1">
    <molecule id="O08644-1"/>
    <property type="nucleotide sequence ID" value="NM_001146351.2"/>
</dbReference>
<dbReference type="RefSeq" id="NP_031706.3">
    <molecule id="O08644-1"/>
    <property type="nucleotide sequence ID" value="NM_007680.4"/>
</dbReference>
<dbReference type="SMR" id="O08644"/>
<dbReference type="BioGRID" id="199479">
    <property type="interactions" value="1"/>
</dbReference>
<dbReference type="FunCoup" id="O08644">
    <property type="interactions" value="76"/>
</dbReference>
<dbReference type="STRING" id="10090.ENSMUSP00000110380"/>
<dbReference type="BindingDB" id="O08644"/>
<dbReference type="ChEMBL" id="CHEMBL4739668"/>
<dbReference type="GuidetoPHARMACOLOGY" id="1834"/>
<dbReference type="GlyCosmos" id="O08644">
    <property type="glycosylation" value="1 site, No reported glycans"/>
</dbReference>
<dbReference type="GlyGen" id="O08644">
    <property type="glycosylation" value="1 site"/>
</dbReference>
<dbReference type="iPTMnet" id="O08644"/>
<dbReference type="PhosphoSitePlus" id="O08644"/>
<dbReference type="jPOST" id="O08644"/>
<dbReference type="PaxDb" id="10090-ENSMUSP00000110380"/>
<dbReference type="PeptideAtlas" id="O08644"/>
<dbReference type="ProteomicsDB" id="275628">
    <molecule id="O08644-1"/>
</dbReference>
<dbReference type="ProteomicsDB" id="275629">
    <molecule id="O08644-2"/>
</dbReference>
<dbReference type="ProteomicsDB" id="275630">
    <molecule id="O08644-3"/>
</dbReference>
<dbReference type="Antibodypedia" id="32576">
    <property type="antibodies" value="541 antibodies from 31 providers"/>
</dbReference>
<dbReference type="DNASU" id="13848"/>
<dbReference type="Ensembl" id="ENSMUST00000114732.3">
    <molecule id="O08644-1"/>
    <property type="protein sequence ID" value="ENSMUSP00000110380.3"/>
    <property type="gene ID" value="ENSMUSG00000029869.8"/>
</dbReference>
<dbReference type="GeneID" id="13848"/>
<dbReference type="KEGG" id="mmu:13848"/>
<dbReference type="UCSC" id="uc009bqa.2">
    <molecule id="O08644-1"/>
    <property type="organism name" value="mouse"/>
</dbReference>
<dbReference type="AGR" id="MGI:1096338"/>
<dbReference type="CTD" id="2051"/>
<dbReference type="MGI" id="MGI:1096338">
    <property type="gene designation" value="Ephb6"/>
</dbReference>
<dbReference type="VEuPathDB" id="HostDB:ENSMUSG00000029869"/>
<dbReference type="eggNOG" id="KOG0196">
    <property type="taxonomic scope" value="Eukaryota"/>
</dbReference>
<dbReference type="GeneTree" id="ENSGT00940000160399"/>
<dbReference type="HOGENOM" id="CLU_000288_141_4_1"/>
<dbReference type="InParanoid" id="O08644"/>
<dbReference type="OMA" id="PQGPSCM"/>
<dbReference type="OrthoDB" id="9826029at2759"/>
<dbReference type="PhylomeDB" id="O08644"/>
<dbReference type="TreeFam" id="TF314013"/>
<dbReference type="Reactome" id="R-MMU-2682334">
    <property type="pathway name" value="EPH-Ephrin signaling"/>
</dbReference>
<dbReference type="Reactome" id="R-MMU-3928662">
    <property type="pathway name" value="EPHB-mediated forward signaling"/>
</dbReference>
<dbReference type="Reactome" id="R-MMU-3928664">
    <property type="pathway name" value="Ephrin signaling"/>
</dbReference>
<dbReference type="Reactome" id="R-MMU-3928665">
    <property type="pathway name" value="EPH-ephrin mediated repulsion of cells"/>
</dbReference>
<dbReference type="BioGRID-ORCS" id="13848">
    <property type="hits" value="1 hit in 80 CRISPR screens"/>
</dbReference>
<dbReference type="ChiTaRS" id="Ephb6">
    <property type="organism name" value="mouse"/>
</dbReference>
<dbReference type="PRO" id="PR:O08644"/>
<dbReference type="Proteomes" id="UP000000589">
    <property type="component" value="Chromosome 6"/>
</dbReference>
<dbReference type="RNAct" id="O08644">
    <property type="molecule type" value="protein"/>
</dbReference>
<dbReference type="Bgee" id="ENSMUSG00000029869">
    <property type="expression patterns" value="Expressed in lip and 153 other cell types or tissues"/>
</dbReference>
<dbReference type="ExpressionAtlas" id="O08644">
    <property type="expression patterns" value="baseline and differential"/>
</dbReference>
<dbReference type="GO" id="GO:0009986">
    <property type="term" value="C:cell surface"/>
    <property type="evidence" value="ECO:0000314"/>
    <property type="project" value="MGI"/>
</dbReference>
<dbReference type="GO" id="GO:0005576">
    <property type="term" value="C:extracellular region"/>
    <property type="evidence" value="ECO:0007669"/>
    <property type="project" value="UniProtKB-SubCell"/>
</dbReference>
<dbReference type="GO" id="GO:0005886">
    <property type="term" value="C:plasma membrane"/>
    <property type="evidence" value="ECO:0007669"/>
    <property type="project" value="UniProtKB-SubCell"/>
</dbReference>
<dbReference type="GO" id="GO:0005524">
    <property type="term" value="F:ATP binding"/>
    <property type="evidence" value="ECO:0007669"/>
    <property type="project" value="UniProtKB-KW"/>
</dbReference>
<dbReference type="GO" id="GO:0005003">
    <property type="term" value="F:ephrin receptor activity"/>
    <property type="evidence" value="ECO:0007669"/>
    <property type="project" value="InterPro"/>
</dbReference>
<dbReference type="GO" id="GO:0050798">
    <property type="term" value="P:activated T cell proliferation"/>
    <property type="evidence" value="ECO:0000315"/>
    <property type="project" value="MGI"/>
</dbReference>
<dbReference type="GO" id="GO:2000525">
    <property type="term" value="P:positive regulation of T cell costimulation"/>
    <property type="evidence" value="ECO:0000316"/>
    <property type="project" value="MGI"/>
</dbReference>
<dbReference type="GO" id="GO:0002456">
    <property type="term" value="P:T cell mediated immunity"/>
    <property type="evidence" value="ECO:0000315"/>
    <property type="project" value="MGI"/>
</dbReference>
<dbReference type="GO" id="GO:0001806">
    <property type="term" value="P:type IV hypersensitivity"/>
    <property type="evidence" value="ECO:0000315"/>
    <property type="project" value="MGI"/>
</dbReference>
<dbReference type="CDD" id="cd10475">
    <property type="entry name" value="EphR_LBD_B6"/>
    <property type="match status" value="1"/>
</dbReference>
<dbReference type="CDD" id="cd00063">
    <property type="entry name" value="FN3"/>
    <property type="match status" value="2"/>
</dbReference>
<dbReference type="CDD" id="cd09555">
    <property type="entry name" value="SAM_EPH-B6"/>
    <property type="match status" value="1"/>
</dbReference>
<dbReference type="FunFam" id="2.10.50.10:FF:000001">
    <property type="entry name" value="Ephrin type-A receptor 5"/>
    <property type="match status" value="1"/>
</dbReference>
<dbReference type="FunFam" id="2.60.40.10:FF:000059">
    <property type="entry name" value="Ephrin type-A receptor 6"/>
    <property type="match status" value="1"/>
</dbReference>
<dbReference type="FunFam" id="1.10.150.50:FF:000068">
    <property type="entry name" value="Ephrin type-B receptor 6"/>
    <property type="match status" value="1"/>
</dbReference>
<dbReference type="FunFam" id="1.10.510.10:FF:000470">
    <property type="entry name" value="Ephrin type-B receptor 6"/>
    <property type="match status" value="1"/>
</dbReference>
<dbReference type="FunFam" id="2.60.120.260:FF:000064">
    <property type="entry name" value="Ephrin type-B receptor 6"/>
    <property type="match status" value="1"/>
</dbReference>
<dbReference type="FunFam" id="3.30.200.20:FF:000143">
    <property type="entry name" value="Ephrin type-B receptor 6"/>
    <property type="match status" value="1"/>
</dbReference>
<dbReference type="FunFam" id="2.60.40.10:FF:000508">
    <property type="entry name" value="ephrin type-B receptor 6"/>
    <property type="match status" value="1"/>
</dbReference>
<dbReference type="FunFam" id="2.60.40.1770:FF:000004">
    <property type="entry name" value="ephrin type-B receptor 6"/>
    <property type="match status" value="1"/>
</dbReference>
<dbReference type="Gene3D" id="2.60.40.1770">
    <property type="entry name" value="ephrin a2 ectodomain"/>
    <property type="match status" value="1"/>
</dbReference>
<dbReference type="Gene3D" id="2.60.120.260">
    <property type="entry name" value="Galactose-binding domain-like"/>
    <property type="match status" value="1"/>
</dbReference>
<dbReference type="Gene3D" id="2.60.40.10">
    <property type="entry name" value="Immunoglobulins"/>
    <property type="match status" value="2"/>
</dbReference>
<dbReference type="Gene3D" id="3.30.200.20">
    <property type="entry name" value="Phosphorylase Kinase, domain 1"/>
    <property type="match status" value="1"/>
</dbReference>
<dbReference type="Gene3D" id="1.10.150.50">
    <property type="entry name" value="Transcription Factor, Ets-1"/>
    <property type="match status" value="1"/>
</dbReference>
<dbReference type="Gene3D" id="1.10.510.10">
    <property type="entry name" value="Transferase(Phosphotransferase) domain 1"/>
    <property type="match status" value="1"/>
</dbReference>
<dbReference type="Gene3D" id="2.10.50.10">
    <property type="entry name" value="Tumor Necrosis Factor Receptor, subunit A, domain 2"/>
    <property type="match status" value="1"/>
</dbReference>
<dbReference type="InterPro" id="IPR027936">
    <property type="entry name" value="Eph_TM"/>
</dbReference>
<dbReference type="InterPro" id="IPR001090">
    <property type="entry name" value="Ephrin_rcpt_lig-bd_dom"/>
</dbReference>
<dbReference type="InterPro" id="IPR050449">
    <property type="entry name" value="Ephrin_rcpt_TKs"/>
</dbReference>
<dbReference type="InterPro" id="IPR003961">
    <property type="entry name" value="FN3_dom"/>
</dbReference>
<dbReference type="InterPro" id="IPR036116">
    <property type="entry name" value="FN3_sf"/>
</dbReference>
<dbReference type="InterPro" id="IPR008979">
    <property type="entry name" value="Galactose-bd-like_sf"/>
</dbReference>
<dbReference type="InterPro" id="IPR013783">
    <property type="entry name" value="Ig-like_fold"/>
</dbReference>
<dbReference type="InterPro" id="IPR011009">
    <property type="entry name" value="Kinase-like_dom_sf"/>
</dbReference>
<dbReference type="InterPro" id="IPR000719">
    <property type="entry name" value="Prot_kinase_dom"/>
</dbReference>
<dbReference type="InterPro" id="IPR001660">
    <property type="entry name" value="SAM"/>
</dbReference>
<dbReference type="InterPro" id="IPR013761">
    <property type="entry name" value="SAM/pointed_sf"/>
</dbReference>
<dbReference type="InterPro" id="IPR001245">
    <property type="entry name" value="Ser-Thr/Tyr_kinase_cat_dom"/>
</dbReference>
<dbReference type="InterPro" id="IPR011641">
    <property type="entry name" value="Tyr-kin_ephrin_A/B_rcpt-like"/>
</dbReference>
<dbReference type="InterPro" id="IPR016257">
    <property type="entry name" value="Tyr_kinase_ephrin_rcpt"/>
</dbReference>
<dbReference type="InterPro" id="IPR001426">
    <property type="entry name" value="Tyr_kinase_rcpt_V_CS"/>
</dbReference>
<dbReference type="PANTHER" id="PTHR46877">
    <property type="entry name" value="EPH RECEPTOR A5"/>
    <property type="match status" value="1"/>
</dbReference>
<dbReference type="PANTHER" id="PTHR46877:SF15">
    <property type="entry name" value="EPHRIN TYPE-B RECEPTOR 6"/>
    <property type="match status" value="1"/>
</dbReference>
<dbReference type="Pfam" id="PF14575">
    <property type="entry name" value="EphA2_TM"/>
    <property type="match status" value="1"/>
</dbReference>
<dbReference type="Pfam" id="PF01404">
    <property type="entry name" value="Ephrin_lbd"/>
    <property type="match status" value="1"/>
</dbReference>
<dbReference type="Pfam" id="PF07699">
    <property type="entry name" value="Ephrin_rec_like"/>
    <property type="match status" value="1"/>
</dbReference>
<dbReference type="Pfam" id="PF00041">
    <property type="entry name" value="fn3"/>
    <property type="match status" value="1"/>
</dbReference>
<dbReference type="Pfam" id="PF07714">
    <property type="entry name" value="PK_Tyr_Ser-Thr"/>
    <property type="match status" value="1"/>
</dbReference>
<dbReference type="Pfam" id="PF07647">
    <property type="entry name" value="SAM_2"/>
    <property type="match status" value="1"/>
</dbReference>
<dbReference type="PIRSF" id="PIRSF000666">
    <property type="entry name" value="TyrPK_ephrin_receptor"/>
    <property type="match status" value="1"/>
</dbReference>
<dbReference type="PRINTS" id="PR00014">
    <property type="entry name" value="FNTYPEIII"/>
</dbReference>
<dbReference type="PRINTS" id="PR00109">
    <property type="entry name" value="TYRKINASE"/>
</dbReference>
<dbReference type="SMART" id="SM00615">
    <property type="entry name" value="EPH_lbd"/>
    <property type="match status" value="1"/>
</dbReference>
<dbReference type="SMART" id="SM01411">
    <property type="entry name" value="Ephrin_rec_like"/>
    <property type="match status" value="1"/>
</dbReference>
<dbReference type="SMART" id="SM00060">
    <property type="entry name" value="FN3"/>
    <property type="match status" value="2"/>
</dbReference>
<dbReference type="SMART" id="SM00454">
    <property type="entry name" value="SAM"/>
    <property type="match status" value="1"/>
</dbReference>
<dbReference type="SUPFAM" id="SSF49265">
    <property type="entry name" value="Fibronectin type III"/>
    <property type="match status" value="1"/>
</dbReference>
<dbReference type="SUPFAM" id="SSF49785">
    <property type="entry name" value="Galactose-binding domain-like"/>
    <property type="match status" value="1"/>
</dbReference>
<dbReference type="SUPFAM" id="SSF56112">
    <property type="entry name" value="Protein kinase-like (PK-like)"/>
    <property type="match status" value="1"/>
</dbReference>
<dbReference type="SUPFAM" id="SSF47769">
    <property type="entry name" value="SAM/Pointed domain"/>
    <property type="match status" value="1"/>
</dbReference>
<dbReference type="PROSITE" id="PS51550">
    <property type="entry name" value="EPH_LBD"/>
    <property type="match status" value="1"/>
</dbReference>
<dbReference type="PROSITE" id="PS50853">
    <property type="entry name" value="FN3"/>
    <property type="match status" value="2"/>
</dbReference>
<dbReference type="PROSITE" id="PS50011">
    <property type="entry name" value="PROTEIN_KINASE_DOM"/>
    <property type="match status" value="1"/>
</dbReference>
<dbReference type="PROSITE" id="PS00790">
    <property type="entry name" value="RECEPTOR_TYR_KIN_V_1"/>
    <property type="match status" value="1"/>
</dbReference>
<dbReference type="PROSITE" id="PS00791">
    <property type="entry name" value="RECEPTOR_TYR_KIN_V_2"/>
    <property type="match status" value="1"/>
</dbReference>
<dbReference type="PROSITE" id="PS50105">
    <property type="entry name" value="SAM_DOMAIN"/>
    <property type="match status" value="1"/>
</dbReference>
<gene>
    <name type="primary">Ephb6</name>
    <name type="synonym">Cekl</name>
</gene>
<keyword id="KW-0025">Alternative splicing</keyword>
<keyword id="KW-0067">ATP-binding</keyword>
<keyword id="KW-1003">Cell membrane</keyword>
<keyword id="KW-0325">Glycoprotein</keyword>
<keyword id="KW-0472">Membrane</keyword>
<keyword id="KW-0547">Nucleotide-binding</keyword>
<keyword id="KW-0675">Receptor</keyword>
<keyword id="KW-1185">Reference proteome</keyword>
<keyword id="KW-0677">Repeat</keyword>
<keyword id="KW-0964">Secreted</keyword>
<keyword id="KW-0732">Signal</keyword>
<keyword id="KW-0812">Transmembrane</keyword>
<keyword id="KW-1133">Transmembrane helix</keyword>
<feature type="signal peptide" evidence="1">
    <location>
        <begin position="1"/>
        <end position="32"/>
    </location>
</feature>
<feature type="chain" id="PRO_0000016838" description="Ephrin type-B receptor 6">
    <location>
        <begin position="33"/>
        <end position="1014"/>
    </location>
</feature>
<feature type="topological domain" description="Extracellular" evidence="2">
    <location>
        <begin position="33"/>
        <end position="591"/>
    </location>
</feature>
<feature type="transmembrane region" description="Helical" evidence="2">
    <location>
        <begin position="592"/>
        <end position="612"/>
    </location>
</feature>
<feature type="topological domain" description="Cytoplasmic" evidence="2">
    <location>
        <begin position="613"/>
        <end position="1014"/>
    </location>
</feature>
<feature type="domain" description="Eph LBD" evidence="6">
    <location>
        <begin position="34"/>
        <end position="232"/>
    </location>
</feature>
<feature type="domain" description="Fibronectin type-III 1" evidence="5">
    <location>
        <begin position="364"/>
        <end position="479"/>
    </location>
</feature>
<feature type="domain" description="Fibronectin type-III 2" evidence="5">
    <location>
        <begin position="480"/>
        <end position="575"/>
    </location>
</feature>
<feature type="domain" description="Protein kinase" evidence="3">
    <location>
        <begin position="663"/>
        <end position="912"/>
    </location>
</feature>
<feature type="domain" description="SAM" evidence="4">
    <location>
        <begin position="941"/>
        <end position="1005"/>
    </location>
</feature>
<feature type="short sequence motif" description="PDZ-binding" evidence="2">
    <location>
        <begin position="1012"/>
        <end position="1014"/>
    </location>
</feature>
<feature type="binding site" evidence="3">
    <location>
        <begin position="669"/>
        <end position="677"/>
    </location>
    <ligand>
        <name>ATP</name>
        <dbReference type="ChEBI" id="CHEBI:30616"/>
    </ligand>
</feature>
<feature type="glycosylation site" description="N-linked (GlcNAc...) asparagine" evidence="2">
    <location>
        <position position="473"/>
    </location>
</feature>
<feature type="splice variant" id="VSP_003020" description="In isoform 2." evidence="8">
    <original>P</original>
    <variation>PCPALPLFTEHSRPEVC</variation>
    <location>
        <position position="328"/>
    </location>
</feature>
<feature type="splice variant" id="VSP_003021" description="In isoform 2." evidence="8">
    <location>
        <begin position="329"/>
        <end position="1014"/>
    </location>
</feature>
<feature type="splice variant" id="VSP_003022" description="In isoform 3." evidence="8">
    <original>P</original>
    <variation>S</variation>
    <location>
        <position position="583"/>
    </location>
</feature>
<feature type="splice variant" id="VSP_003023" description="In isoform 3." evidence="8">
    <location>
        <begin position="584"/>
        <end position="1014"/>
    </location>
</feature>
<feature type="sequence conflict" description="In Ref. 2; BAC39868." evidence="9" ref="2">
    <original>H</original>
    <variation>Y</variation>
    <location>
        <position position="527"/>
    </location>
</feature>
<feature type="sequence conflict" description="In Ref. 3; AAH31924." evidence="9" ref="3">
    <original>S</original>
    <variation>T</variation>
    <location>
        <position position="544"/>
    </location>
</feature>
<feature type="sequence conflict" description="In Ref. 1; AAB51430." evidence="9" ref="1">
    <original>T</original>
    <variation>A</variation>
    <location>
        <position position="732"/>
    </location>
</feature>
<reference key="1">
    <citation type="journal article" date="1996" name="Oncogene">
        <title>A new member of the Eph family of receptors that lacks protein tyrosine kinase activity.</title>
        <authorList>
            <person name="Gurniak C.B."/>
            <person name="Berg L.J."/>
        </authorList>
    </citation>
    <scope>NUCLEOTIDE SEQUENCE [MRNA] (ISOFORMS 1; 2 AND 3)</scope>
    <scope>TISSUE SPECIFICITY</scope>
    <source>
        <strain>BALB/C X 129</strain>
        <tissue>Thymus</tissue>
    </source>
</reference>
<reference key="2">
    <citation type="journal article" date="2005" name="Science">
        <title>The transcriptional landscape of the mammalian genome.</title>
        <authorList>
            <person name="Carninci P."/>
            <person name="Kasukawa T."/>
            <person name="Katayama S."/>
            <person name="Gough J."/>
            <person name="Frith M.C."/>
            <person name="Maeda N."/>
            <person name="Oyama R."/>
            <person name="Ravasi T."/>
            <person name="Lenhard B."/>
            <person name="Wells C."/>
            <person name="Kodzius R."/>
            <person name="Shimokawa K."/>
            <person name="Bajic V.B."/>
            <person name="Brenner S.E."/>
            <person name="Batalov S."/>
            <person name="Forrest A.R."/>
            <person name="Zavolan M."/>
            <person name="Davis M.J."/>
            <person name="Wilming L.G."/>
            <person name="Aidinis V."/>
            <person name="Allen J.E."/>
            <person name="Ambesi-Impiombato A."/>
            <person name="Apweiler R."/>
            <person name="Aturaliya R.N."/>
            <person name="Bailey T.L."/>
            <person name="Bansal M."/>
            <person name="Baxter L."/>
            <person name="Beisel K.W."/>
            <person name="Bersano T."/>
            <person name="Bono H."/>
            <person name="Chalk A.M."/>
            <person name="Chiu K.P."/>
            <person name="Choudhary V."/>
            <person name="Christoffels A."/>
            <person name="Clutterbuck D.R."/>
            <person name="Crowe M.L."/>
            <person name="Dalla E."/>
            <person name="Dalrymple B.P."/>
            <person name="de Bono B."/>
            <person name="Della Gatta G."/>
            <person name="di Bernardo D."/>
            <person name="Down T."/>
            <person name="Engstrom P."/>
            <person name="Fagiolini M."/>
            <person name="Faulkner G."/>
            <person name="Fletcher C.F."/>
            <person name="Fukushima T."/>
            <person name="Furuno M."/>
            <person name="Futaki S."/>
            <person name="Gariboldi M."/>
            <person name="Georgii-Hemming P."/>
            <person name="Gingeras T.R."/>
            <person name="Gojobori T."/>
            <person name="Green R.E."/>
            <person name="Gustincich S."/>
            <person name="Harbers M."/>
            <person name="Hayashi Y."/>
            <person name="Hensch T.K."/>
            <person name="Hirokawa N."/>
            <person name="Hill D."/>
            <person name="Huminiecki L."/>
            <person name="Iacono M."/>
            <person name="Ikeo K."/>
            <person name="Iwama A."/>
            <person name="Ishikawa T."/>
            <person name="Jakt M."/>
            <person name="Kanapin A."/>
            <person name="Katoh M."/>
            <person name="Kawasawa Y."/>
            <person name="Kelso J."/>
            <person name="Kitamura H."/>
            <person name="Kitano H."/>
            <person name="Kollias G."/>
            <person name="Krishnan S.P."/>
            <person name="Kruger A."/>
            <person name="Kummerfeld S.K."/>
            <person name="Kurochkin I.V."/>
            <person name="Lareau L.F."/>
            <person name="Lazarevic D."/>
            <person name="Lipovich L."/>
            <person name="Liu J."/>
            <person name="Liuni S."/>
            <person name="McWilliam S."/>
            <person name="Madan Babu M."/>
            <person name="Madera M."/>
            <person name="Marchionni L."/>
            <person name="Matsuda H."/>
            <person name="Matsuzawa S."/>
            <person name="Miki H."/>
            <person name="Mignone F."/>
            <person name="Miyake S."/>
            <person name="Morris K."/>
            <person name="Mottagui-Tabar S."/>
            <person name="Mulder N."/>
            <person name="Nakano N."/>
            <person name="Nakauchi H."/>
            <person name="Ng P."/>
            <person name="Nilsson R."/>
            <person name="Nishiguchi S."/>
            <person name="Nishikawa S."/>
            <person name="Nori F."/>
            <person name="Ohara O."/>
            <person name="Okazaki Y."/>
            <person name="Orlando V."/>
            <person name="Pang K.C."/>
            <person name="Pavan W.J."/>
            <person name="Pavesi G."/>
            <person name="Pesole G."/>
            <person name="Petrovsky N."/>
            <person name="Piazza S."/>
            <person name="Reed J."/>
            <person name="Reid J.F."/>
            <person name="Ring B.Z."/>
            <person name="Ringwald M."/>
            <person name="Rost B."/>
            <person name="Ruan Y."/>
            <person name="Salzberg S.L."/>
            <person name="Sandelin A."/>
            <person name="Schneider C."/>
            <person name="Schoenbach C."/>
            <person name="Sekiguchi K."/>
            <person name="Semple C.A."/>
            <person name="Seno S."/>
            <person name="Sessa L."/>
            <person name="Sheng Y."/>
            <person name="Shibata Y."/>
            <person name="Shimada H."/>
            <person name="Shimada K."/>
            <person name="Silva D."/>
            <person name="Sinclair B."/>
            <person name="Sperling S."/>
            <person name="Stupka E."/>
            <person name="Sugiura K."/>
            <person name="Sultana R."/>
            <person name="Takenaka Y."/>
            <person name="Taki K."/>
            <person name="Tammoja K."/>
            <person name="Tan S.L."/>
            <person name="Tang S."/>
            <person name="Taylor M.S."/>
            <person name="Tegner J."/>
            <person name="Teichmann S.A."/>
            <person name="Ueda H.R."/>
            <person name="van Nimwegen E."/>
            <person name="Verardo R."/>
            <person name="Wei C.L."/>
            <person name="Yagi K."/>
            <person name="Yamanishi H."/>
            <person name="Zabarovsky E."/>
            <person name="Zhu S."/>
            <person name="Zimmer A."/>
            <person name="Hide W."/>
            <person name="Bult C."/>
            <person name="Grimmond S.M."/>
            <person name="Teasdale R.D."/>
            <person name="Liu E.T."/>
            <person name="Brusic V."/>
            <person name="Quackenbush J."/>
            <person name="Wahlestedt C."/>
            <person name="Mattick J.S."/>
            <person name="Hume D.A."/>
            <person name="Kai C."/>
            <person name="Sasaki D."/>
            <person name="Tomaru Y."/>
            <person name="Fukuda S."/>
            <person name="Kanamori-Katayama M."/>
            <person name="Suzuki M."/>
            <person name="Aoki J."/>
            <person name="Arakawa T."/>
            <person name="Iida J."/>
            <person name="Imamura K."/>
            <person name="Itoh M."/>
            <person name="Kato T."/>
            <person name="Kawaji H."/>
            <person name="Kawagashira N."/>
            <person name="Kawashima T."/>
            <person name="Kojima M."/>
            <person name="Kondo S."/>
            <person name="Konno H."/>
            <person name="Nakano K."/>
            <person name="Ninomiya N."/>
            <person name="Nishio T."/>
            <person name="Okada M."/>
            <person name="Plessy C."/>
            <person name="Shibata K."/>
            <person name="Shiraki T."/>
            <person name="Suzuki S."/>
            <person name="Tagami M."/>
            <person name="Waki K."/>
            <person name="Watahiki A."/>
            <person name="Okamura-Oho Y."/>
            <person name="Suzuki H."/>
            <person name="Kawai J."/>
            <person name="Hayashizaki Y."/>
        </authorList>
    </citation>
    <scope>NUCLEOTIDE SEQUENCE [LARGE SCALE MRNA] (ISOFORM 1)</scope>
    <source>
        <strain>C57BL/6J</strain>
        <tissue>Eye</tissue>
        <tissue>Head</tissue>
    </source>
</reference>
<reference key="3">
    <citation type="journal article" date="2004" name="Genome Res.">
        <title>The status, quality, and expansion of the NIH full-length cDNA project: the Mammalian Gene Collection (MGC).</title>
        <authorList>
            <consortium name="The MGC Project Team"/>
        </authorList>
    </citation>
    <scope>NUCLEOTIDE SEQUENCE [LARGE SCALE MRNA] (ISOFORM 1)</scope>
    <source>
        <strain>FVB/N</strain>
        <tissue>Salivary gland</tissue>
    </source>
</reference>